<keyword id="KW-0025">Alternative splicing</keyword>
<keyword id="KW-0968">Cytoplasmic vesicle</keyword>
<keyword id="KW-0597">Phosphoprotein</keyword>
<keyword id="KW-1185">Reference proteome</keyword>
<keyword id="KW-0732">Signal</keyword>
<protein>
    <recommendedName>
        <fullName>Acrosin-binding protein</fullName>
    </recommendedName>
    <alternativeName>
        <fullName>Acrosin-binding protein, 60 kDa form</fullName>
    </alternativeName>
    <alternativeName>
        <fullName>Proacrosin-binding protein sp32</fullName>
    </alternativeName>
    <component>
        <recommendedName>
            <fullName>Acrosin-binding protein, mature form</fullName>
        </recommendedName>
        <alternativeName>
            <fullName>Acrosin-binding protein, 32 kDa form, mature form</fullName>
        </alternativeName>
    </component>
</protein>
<reference key="1">
    <citation type="journal article" date="2004" name="Nature">
        <title>Genome sequence of the Brown Norway rat yields insights into mammalian evolution.</title>
        <authorList>
            <person name="Gibbs R.A."/>
            <person name="Weinstock G.M."/>
            <person name="Metzker M.L."/>
            <person name="Muzny D.M."/>
            <person name="Sodergren E.J."/>
            <person name="Scherer S."/>
            <person name="Scott G."/>
            <person name="Steffen D."/>
            <person name="Worley K.C."/>
            <person name="Burch P.E."/>
            <person name="Okwuonu G."/>
            <person name="Hines S."/>
            <person name="Lewis L."/>
            <person name="Deramo C."/>
            <person name="Delgado O."/>
            <person name="Dugan-Rocha S."/>
            <person name="Miner G."/>
            <person name="Morgan M."/>
            <person name="Hawes A."/>
            <person name="Gill R."/>
            <person name="Holt R.A."/>
            <person name="Adams M.D."/>
            <person name="Amanatides P.G."/>
            <person name="Baden-Tillson H."/>
            <person name="Barnstead M."/>
            <person name="Chin S."/>
            <person name="Evans C.A."/>
            <person name="Ferriera S."/>
            <person name="Fosler C."/>
            <person name="Glodek A."/>
            <person name="Gu Z."/>
            <person name="Jennings D."/>
            <person name="Kraft C.L."/>
            <person name="Nguyen T."/>
            <person name="Pfannkoch C.M."/>
            <person name="Sitter C."/>
            <person name="Sutton G.G."/>
            <person name="Venter J.C."/>
            <person name="Woodage T."/>
            <person name="Smith D."/>
            <person name="Lee H.-M."/>
            <person name="Gustafson E."/>
            <person name="Cahill P."/>
            <person name="Kana A."/>
            <person name="Doucette-Stamm L."/>
            <person name="Weinstock K."/>
            <person name="Fechtel K."/>
            <person name="Weiss R.B."/>
            <person name="Dunn D.M."/>
            <person name="Green E.D."/>
            <person name="Blakesley R.W."/>
            <person name="Bouffard G.G."/>
            <person name="De Jong P.J."/>
            <person name="Osoegawa K."/>
            <person name="Zhu B."/>
            <person name="Marra M."/>
            <person name="Schein J."/>
            <person name="Bosdet I."/>
            <person name="Fjell C."/>
            <person name="Jones S."/>
            <person name="Krzywinski M."/>
            <person name="Mathewson C."/>
            <person name="Siddiqui A."/>
            <person name="Wye N."/>
            <person name="McPherson J."/>
            <person name="Zhao S."/>
            <person name="Fraser C.M."/>
            <person name="Shetty J."/>
            <person name="Shatsman S."/>
            <person name="Geer K."/>
            <person name="Chen Y."/>
            <person name="Abramzon S."/>
            <person name="Nierman W.C."/>
            <person name="Havlak P.H."/>
            <person name="Chen R."/>
            <person name="Durbin K.J."/>
            <person name="Egan A."/>
            <person name="Ren Y."/>
            <person name="Song X.-Z."/>
            <person name="Li B."/>
            <person name="Liu Y."/>
            <person name="Qin X."/>
            <person name="Cawley S."/>
            <person name="Cooney A.J."/>
            <person name="D'Souza L.M."/>
            <person name="Martin K."/>
            <person name="Wu J.Q."/>
            <person name="Gonzalez-Garay M.L."/>
            <person name="Jackson A.R."/>
            <person name="Kalafus K.J."/>
            <person name="McLeod M.P."/>
            <person name="Milosavljevic A."/>
            <person name="Virk D."/>
            <person name="Volkov A."/>
            <person name="Wheeler D.A."/>
            <person name="Zhang Z."/>
            <person name="Bailey J.A."/>
            <person name="Eichler E.E."/>
            <person name="Tuzun E."/>
            <person name="Birney E."/>
            <person name="Mongin E."/>
            <person name="Ureta-Vidal A."/>
            <person name="Woodwark C."/>
            <person name="Zdobnov E."/>
            <person name="Bork P."/>
            <person name="Suyama M."/>
            <person name="Torrents D."/>
            <person name="Alexandersson M."/>
            <person name="Trask B.J."/>
            <person name="Young J.M."/>
            <person name="Huang H."/>
            <person name="Wang H."/>
            <person name="Xing H."/>
            <person name="Daniels S."/>
            <person name="Gietzen D."/>
            <person name="Schmidt J."/>
            <person name="Stevens K."/>
            <person name="Vitt U."/>
            <person name="Wingrove J."/>
            <person name="Camara F."/>
            <person name="Mar Alba M."/>
            <person name="Abril J.F."/>
            <person name="Guigo R."/>
            <person name="Smit A."/>
            <person name="Dubchak I."/>
            <person name="Rubin E.M."/>
            <person name="Couronne O."/>
            <person name="Poliakov A."/>
            <person name="Huebner N."/>
            <person name="Ganten D."/>
            <person name="Goesele C."/>
            <person name="Hummel O."/>
            <person name="Kreitler T."/>
            <person name="Lee Y.-A."/>
            <person name="Monti J."/>
            <person name="Schulz H."/>
            <person name="Zimdahl H."/>
            <person name="Himmelbauer H."/>
            <person name="Lehrach H."/>
            <person name="Jacob H.J."/>
            <person name="Bromberg S."/>
            <person name="Gullings-Handley J."/>
            <person name="Jensen-Seaman M.I."/>
            <person name="Kwitek A.E."/>
            <person name="Lazar J."/>
            <person name="Pasko D."/>
            <person name="Tonellato P.J."/>
            <person name="Twigger S."/>
            <person name="Ponting C.P."/>
            <person name="Duarte J.M."/>
            <person name="Rice S."/>
            <person name="Goodstadt L."/>
            <person name="Beatson S.A."/>
            <person name="Emes R.D."/>
            <person name="Winter E.E."/>
            <person name="Webber C."/>
            <person name="Brandt P."/>
            <person name="Nyakatura G."/>
            <person name="Adetobi M."/>
            <person name="Chiaromonte F."/>
            <person name="Elnitski L."/>
            <person name="Eswara P."/>
            <person name="Hardison R.C."/>
            <person name="Hou M."/>
            <person name="Kolbe D."/>
            <person name="Makova K."/>
            <person name="Miller W."/>
            <person name="Nekrutenko A."/>
            <person name="Riemer C."/>
            <person name="Schwartz S."/>
            <person name="Taylor J."/>
            <person name="Yang S."/>
            <person name="Zhang Y."/>
            <person name="Lindpaintner K."/>
            <person name="Andrews T.D."/>
            <person name="Caccamo M."/>
            <person name="Clamp M."/>
            <person name="Clarke L."/>
            <person name="Curwen V."/>
            <person name="Durbin R.M."/>
            <person name="Eyras E."/>
            <person name="Searle S.M."/>
            <person name="Cooper G.M."/>
            <person name="Batzoglou S."/>
            <person name="Brudno M."/>
            <person name="Sidow A."/>
            <person name="Stone E.A."/>
            <person name="Payseur B.A."/>
            <person name="Bourque G."/>
            <person name="Lopez-Otin C."/>
            <person name="Puente X.S."/>
            <person name="Chakrabarti K."/>
            <person name="Chatterji S."/>
            <person name="Dewey C."/>
            <person name="Pachter L."/>
            <person name="Bray N."/>
            <person name="Yap V.B."/>
            <person name="Caspi A."/>
            <person name="Tesler G."/>
            <person name="Pevzner P.A."/>
            <person name="Haussler D."/>
            <person name="Roskin K.M."/>
            <person name="Baertsch R."/>
            <person name="Clawson H."/>
            <person name="Furey T.S."/>
            <person name="Hinrichs A.S."/>
            <person name="Karolchik D."/>
            <person name="Kent W.J."/>
            <person name="Rosenbloom K.R."/>
            <person name="Trumbower H."/>
            <person name="Weirauch M."/>
            <person name="Cooper D.N."/>
            <person name="Stenson P.D."/>
            <person name="Ma B."/>
            <person name="Brent M."/>
            <person name="Arumugam M."/>
            <person name="Shteynberg D."/>
            <person name="Copley R.R."/>
            <person name="Taylor M.S."/>
            <person name="Riethman H."/>
            <person name="Mudunuri U."/>
            <person name="Peterson J."/>
            <person name="Guyer M."/>
            <person name="Felsenfeld A."/>
            <person name="Old S."/>
            <person name="Mockrin S."/>
            <person name="Collins F.S."/>
        </authorList>
    </citation>
    <scope>NUCLEOTIDE SEQUENCE [LARGE SCALE GENOMIC DNA]</scope>
    <source>
        <strain>Brown Norway</strain>
    </source>
</reference>
<reference key="2">
    <citation type="journal article" date="2004" name="Genome Res.">
        <title>The status, quality, and expansion of the NIH full-length cDNA project: the Mammalian Gene Collection (MGC).</title>
        <authorList>
            <consortium name="The MGC Project Team"/>
        </authorList>
    </citation>
    <scope>NUCLEOTIDE SEQUENCE [LARGE SCALE MRNA] (ISOFORM 2)</scope>
    <source>
        <tissue>Testis</tissue>
    </source>
</reference>
<evidence type="ECO:0000250" key="1">
    <source>
        <dbReference type="UniProtKB" id="Q29016"/>
    </source>
</evidence>
<evidence type="ECO:0000250" key="2">
    <source>
        <dbReference type="UniProtKB" id="Q3V140"/>
    </source>
</evidence>
<evidence type="ECO:0000255" key="3"/>
<evidence type="ECO:0000256" key="4">
    <source>
        <dbReference type="SAM" id="MobiDB-lite"/>
    </source>
</evidence>
<evidence type="ECO:0000312" key="5">
    <source>
        <dbReference type="EMBL" id="AAH79212.1"/>
    </source>
</evidence>
<feature type="signal peptide" evidence="3">
    <location>
        <begin position="1"/>
        <end position="24"/>
    </location>
</feature>
<feature type="chain" id="PRO_0000227519" description="Acrosin-binding protein">
    <location>
        <begin position="25"/>
        <end position="540"/>
    </location>
</feature>
<feature type="propeptide" id="PRO_0000449373" description="Removed in mature form" evidence="1">
    <location>
        <begin position="25"/>
        <end position="272"/>
    </location>
</feature>
<feature type="chain" id="PRO_0000449374" description="Acrosin-binding protein, mature form">
    <location>
        <begin position="273"/>
        <end position="316"/>
    </location>
</feature>
<feature type="region of interest" description="Pro-ACR binding" evidence="2">
    <location>
        <begin position="25"/>
        <end position="104"/>
    </location>
</feature>
<feature type="region of interest" description="Disordered" evidence="4">
    <location>
        <begin position="181"/>
        <end position="266"/>
    </location>
</feature>
<feature type="region of interest" description="Pro-ACR binding" evidence="2">
    <location>
        <begin position="316"/>
        <end position="424"/>
    </location>
</feature>
<feature type="compositionally biased region" description="Basic and acidic residues" evidence="4">
    <location>
        <begin position="195"/>
        <end position="213"/>
    </location>
</feature>
<feature type="compositionally biased region" description="Acidic residues" evidence="4">
    <location>
        <begin position="214"/>
        <end position="241"/>
    </location>
</feature>
<feature type="compositionally biased region" description="Polar residues" evidence="4">
    <location>
        <begin position="256"/>
        <end position="266"/>
    </location>
</feature>
<feature type="splice variant" id="VSP_060553" description="In isoform 2.">
    <original>SLQQL</original>
    <variation>RYRKL</variation>
    <location>
        <begin position="312"/>
        <end position="316"/>
    </location>
</feature>
<feature type="splice variant" id="VSP_060554" description="In isoform 2.">
    <location>
        <begin position="317"/>
        <end position="540"/>
    </location>
</feature>
<dbReference type="EMBL" id="AC115415">
    <property type="status" value="NOT_ANNOTATED_CDS"/>
    <property type="molecule type" value="Genomic_DNA"/>
</dbReference>
<dbReference type="EMBL" id="BC079212">
    <property type="protein sequence ID" value="AAH79212.1"/>
    <property type="molecule type" value="mRNA"/>
</dbReference>
<dbReference type="RefSeq" id="NP_001020220.1">
    <molecule id="Q6AY33-2"/>
    <property type="nucleotide sequence ID" value="NM_001025049.1"/>
</dbReference>
<dbReference type="RefSeq" id="NP_001388753.1">
    <molecule id="Q6AY33-1"/>
    <property type="nucleotide sequence ID" value="NM_001401824.1"/>
</dbReference>
<dbReference type="RefSeq" id="XP_006237441.1">
    <property type="nucleotide sequence ID" value="XM_006237379.3"/>
</dbReference>
<dbReference type="FunCoup" id="Q6AY33">
    <property type="interactions" value="242"/>
</dbReference>
<dbReference type="STRING" id="10116.ENSRNOP00000024618"/>
<dbReference type="GlyGen" id="Q6AY33">
    <property type="glycosylation" value="1 site"/>
</dbReference>
<dbReference type="PhosphoSitePlus" id="Q6AY33"/>
<dbReference type="PaxDb" id="10116-ENSRNOP00000024618"/>
<dbReference type="GeneID" id="500316"/>
<dbReference type="UCSC" id="RGD:1564880">
    <molecule id="Q6AY33-1"/>
    <property type="organism name" value="rat"/>
</dbReference>
<dbReference type="AGR" id="RGD:1564880"/>
<dbReference type="CTD" id="84519"/>
<dbReference type="RGD" id="1564880">
    <property type="gene designation" value="Acrbp"/>
</dbReference>
<dbReference type="VEuPathDB" id="HostDB:ENSRNOG00000017399"/>
<dbReference type="eggNOG" id="ENOG502R6TS">
    <property type="taxonomic scope" value="Eukaryota"/>
</dbReference>
<dbReference type="HOGENOM" id="CLU_879871_0_0_1"/>
<dbReference type="InParanoid" id="Q6AY33"/>
<dbReference type="OMA" id="YDEEPVW"/>
<dbReference type="PhylomeDB" id="Q6AY33"/>
<dbReference type="PRO" id="PR:Q6AY33"/>
<dbReference type="Proteomes" id="UP000002494">
    <property type="component" value="Chromosome 4"/>
</dbReference>
<dbReference type="Bgee" id="ENSRNOG00000017399">
    <property type="expression patterns" value="Expressed in testis and 19 other cell types or tissues"/>
</dbReference>
<dbReference type="GO" id="GO:0002080">
    <property type="term" value="C:acrosomal membrane"/>
    <property type="evidence" value="ECO:0000250"/>
    <property type="project" value="UniProtKB"/>
</dbReference>
<dbReference type="GO" id="GO:0001669">
    <property type="term" value="C:acrosomal vesicle"/>
    <property type="evidence" value="ECO:0000250"/>
    <property type="project" value="UniProtKB"/>
</dbReference>
<dbReference type="GO" id="GO:0005576">
    <property type="term" value="C:extracellular region"/>
    <property type="evidence" value="ECO:0000250"/>
    <property type="project" value="UniProtKB"/>
</dbReference>
<dbReference type="GO" id="GO:0001675">
    <property type="term" value="P:acrosome assembly"/>
    <property type="evidence" value="ECO:0000250"/>
    <property type="project" value="UniProtKB"/>
</dbReference>
<dbReference type="GO" id="GO:0009566">
    <property type="term" value="P:fertilization"/>
    <property type="evidence" value="ECO:0000250"/>
    <property type="project" value="UniProtKB"/>
</dbReference>
<dbReference type="GO" id="GO:0007286">
    <property type="term" value="P:spermatid development"/>
    <property type="evidence" value="ECO:0000250"/>
    <property type="project" value="UniProtKB"/>
</dbReference>
<dbReference type="InterPro" id="IPR009865">
    <property type="entry name" value="Proacrosin-bd"/>
</dbReference>
<dbReference type="PANTHER" id="PTHR21362">
    <property type="entry name" value="ACROSIN-BINDING PROTEIN"/>
    <property type="match status" value="1"/>
</dbReference>
<dbReference type="PANTHER" id="PTHR21362:SF1">
    <property type="entry name" value="ACROSIN-BINDING PROTEIN"/>
    <property type="match status" value="1"/>
</dbReference>
<dbReference type="Pfam" id="PF07222">
    <property type="entry name" value="PBP_sp32"/>
    <property type="match status" value="1"/>
</dbReference>
<organism>
    <name type="scientific">Rattus norvegicus</name>
    <name type="common">Rat</name>
    <dbReference type="NCBI Taxonomy" id="10116"/>
    <lineage>
        <taxon>Eukaryota</taxon>
        <taxon>Metazoa</taxon>
        <taxon>Chordata</taxon>
        <taxon>Craniata</taxon>
        <taxon>Vertebrata</taxon>
        <taxon>Euteleostomi</taxon>
        <taxon>Mammalia</taxon>
        <taxon>Eutheria</taxon>
        <taxon>Euarchontoglires</taxon>
        <taxon>Glires</taxon>
        <taxon>Rodentia</taxon>
        <taxon>Myomorpha</taxon>
        <taxon>Muroidea</taxon>
        <taxon>Muridae</taxon>
        <taxon>Murinae</taxon>
        <taxon>Rattus</taxon>
    </lineage>
</organism>
<accession>Q6AY33</accession>
<sequence length="540" mass="61080">MKLAASFLLMLLEVLLLPETPLSAEEALASTPGSPLSSTEYERFFALLTPTWKAETTCRLRATHGCRNPTLVQLDQYENHGLVPDGAVCSDLPYASWFESFCQFAQYRCSNHVYYAKRVRCSQPVSILSPNTLKEVESSAEVPLTSVTTPIVSRATATEHQAFQPWPERLNNNVEELLQSSLSLGGKEQQSSRKLGLEQQHKQEQIQEHKLEEAQEQEEQEEEEEEEEAKQEEGQGTEEGLDSVSRLQSDSEPKFQSKSLSSNPSFFTPRVREVESAPLMMENIQELIRSAQEMDEMNELYDDSWRSQSTGSLQQLPHTETLMVLCYSIMENTCTMTPTAKAWSYMEEEILGFGDSVCDNLGRRHTAACPLCAFCSLKLEQCHSEASVLRQQCDASHKIPFISPLLSAQSISTGNQAKIPEKGRFAGLEMYGGLSSEFWCNRLALKGCEDDRVANWLKAEFLSFQDGDLPTKICDTNYVQYPNYCSFKSQQCLLKNQNRKMSRMKCMLNEKYHVLSPAKGEEVILRWSQEFNTLTLGQFG</sequence>
<proteinExistence type="evidence at transcript level"/>
<gene>
    <name evidence="5" type="primary">Acrbp</name>
</gene>
<name>ACRBP_RAT</name>
<comment type="function">
    <text evidence="2">Acrosomal protein that maintains proacrosin (pro-ACR) as an enzymatically inactive zymogen in the acrosome. Involved also in the acrosome formation.</text>
</comment>
<comment type="function">
    <molecule>Acrosin-binding protein, mature form</molecule>
    <text evidence="2">Maintains pro-ACR as an enzymatically inactive zymogen in the acrosome until acrosomal exocytosis. Partially also contributes to the assembly of acrosomal proteins to form an acrosomal granule.</text>
</comment>
<comment type="function">
    <molecule>Isoform 2</molecule>
    <text evidence="2">Rodent specific isoform that participates in the formation of the acrosomal granule into the center of the acrosomal vesicle during early spermiogenesis. In the fertilization process promotes ACR release from the acrosome during acrosomal exocytosis.</text>
</comment>
<comment type="subunit">
    <molecule>Acrosin-binding protein, mature form</molecule>
    <text evidence="2">Binds pro-ACR. Does not bind the mature form of ACR.</text>
</comment>
<comment type="subunit">
    <molecule>Isoform 2</molecule>
    <text evidence="2">Binds pro-ACR. Does not bind mature form of ACR.</text>
</comment>
<comment type="subcellular location">
    <molecule>Isoform 1</molecule>
    <subcellularLocation>
        <location evidence="2">Cytoplasmic vesicle</location>
        <location evidence="2">Secretory vesicle</location>
        <location evidence="2">Acrosome</location>
    </subcellularLocation>
    <text evidence="2">Colocalized with pro-ACR in the acrosomal granules of early round spermatids.</text>
</comment>
<comment type="subcellular location">
    <molecule>Isoform 2</molecule>
    <subcellularLocation>
        <location evidence="2">Cytoplasmic vesicle</location>
        <location evidence="2">Secretory vesicle</location>
        <location evidence="2">Acrosome</location>
    </subcellularLocation>
    <text evidence="2">Highly enriched in acrosomal granules of round spermatids, and spread over the apical end of the nucleus in elongating spermatids. Colocalized in the acrosome of epididymal sperm with pro-ACR.</text>
</comment>
<comment type="alternative products">
    <event type="alternative splicing"/>
    <isoform>
        <id>Q6AY33-1</id>
        <name>1</name>
        <sequence type="displayed"/>
    </isoform>
    <isoform>
        <id>Q6AY33-2</id>
        <name>2</name>
        <sequence type="described" ref="VSP_060553 VSP_060554"/>
    </isoform>
</comment>
<comment type="PTM">
    <text evidence="1">The N-terminus is blocked.</text>
</comment>
<comment type="PTM">
    <text evidence="1">Phosphorylated on Tyr residues in capacitated sperm.</text>
</comment>
<comment type="PTM">
    <text evidence="1">Synthesized as a 60-kDa precursor, the 32-kDa mature form is post-translationally produced by the removal of the N-terminal half of the precursor during sperm maturation in the testis and/or epididymis.</text>
</comment>